<proteinExistence type="evidence at protein level"/>
<feature type="chain" id="PRO_0000084667" description="ATP-dependent zinc metalloprotease YME1L1">
    <location>
        <begin position="1"/>
        <end position="773"/>
    </location>
</feature>
<feature type="topological domain" description="Mitochondrial matrix" evidence="3">
    <location>
        <begin position="1"/>
        <end position="295"/>
    </location>
</feature>
<feature type="transmembrane region" description="Helical" evidence="3">
    <location>
        <begin position="296"/>
        <end position="316"/>
    </location>
</feature>
<feature type="topological domain" description="Mitochondrial intermembrane" evidence="21">
    <location>
        <begin position="317"/>
        <end position="773"/>
    </location>
</feature>
<feature type="active site" evidence="20 22">
    <location>
        <position position="600"/>
    </location>
</feature>
<feature type="binding site" evidence="2">
    <location>
        <position position="341"/>
    </location>
    <ligand>
        <name>ATP</name>
        <dbReference type="ChEBI" id="CHEBI:30616"/>
    </ligand>
</feature>
<feature type="binding site" evidence="2">
    <location>
        <position position="383"/>
    </location>
    <ligand>
        <name>ATP</name>
        <dbReference type="ChEBI" id="CHEBI:30616"/>
    </ligand>
</feature>
<feature type="binding site" evidence="2">
    <location>
        <position position="384"/>
    </location>
    <ligand>
        <name>ATP</name>
        <dbReference type="ChEBI" id="CHEBI:30616"/>
    </ligand>
</feature>
<feature type="binding site" evidence="2">
    <location>
        <position position="385"/>
    </location>
    <ligand>
        <name>ATP</name>
        <dbReference type="ChEBI" id="CHEBI:30616"/>
    </ligand>
</feature>
<feature type="binding site" evidence="2">
    <location>
        <position position="386"/>
    </location>
    <ligand>
        <name>ATP</name>
        <dbReference type="ChEBI" id="CHEBI:30616"/>
    </ligand>
</feature>
<feature type="binding site" evidence="2">
    <location>
        <position position="387"/>
    </location>
    <ligand>
        <name>ATP</name>
        <dbReference type="ChEBI" id="CHEBI:30616"/>
    </ligand>
</feature>
<feature type="binding site" evidence="2">
    <location>
        <position position="599"/>
    </location>
    <ligand>
        <name>Zn(2+)</name>
        <dbReference type="ChEBI" id="CHEBI:29105"/>
        <note>catalytic</note>
    </ligand>
</feature>
<feature type="binding site" evidence="2">
    <location>
        <position position="603"/>
    </location>
    <ligand>
        <name>Zn(2+)</name>
        <dbReference type="ChEBI" id="CHEBI:29105"/>
        <note>catalytic</note>
    </ligand>
</feature>
<feature type="binding site" evidence="2">
    <location>
        <position position="677"/>
    </location>
    <ligand>
        <name>Zn(2+)</name>
        <dbReference type="ChEBI" id="CHEBI:29105"/>
        <note>catalytic</note>
    </ligand>
</feature>
<feature type="splice variant" id="VSP_010017" description="In isoform 2 and isoform 3." evidence="15 16 17 18">
    <location>
        <begin position="57"/>
        <end position="113"/>
    </location>
</feature>
<feature type="splice variant" id="VSP_045336" description="In isoform 3." evidence="17">
    <location>
        <begin position="168"/>
        <end position="200"/>
    </location>
</feature>
<feature type="sequence variant" id="VAR_076869" description="In OPA11; does not affect localization to mitochondria; abolishes processing to mature form by MPP; results in decreased mitochondrial protein catabolism; has very low protease activity; results in mitochondrial fragmentation; dbSNP:rs1057519312." evidence="10">
    <original>R</original>
    <variation>W</variation>
    <location>
        <position position="206"/>
    </location>
</feature>
<feature type="mutagenesis site" description="Loss of ATPase and protease activity. Loss of PRELID1 degradation. Cannot restore OMA1 degradation in YME1L-depleted cells." evidence="9 10 11">
    <original>E</original>
    <variation>Q</variation>
    <location>
        <position position="439"/>
    </location>
</feature>
<feature type="mutagenesis site" description="Loss of protease activity. Cannot restore OMA1 degradation in YME1L-depleted cells." evidence="9 12">
    <original>E</original>
    <variation>Q</variation>
    <location>
        <position position="600"/>
    </location>
</feature>
<feature type="sequence conflict" description="In Ref. 1; AAK57555." evidence="19" ref="1">
    <original>V</original>
    <variation>F</variation>
    <location>
        <position position="12"/>
    </location>
</feature>
<protein>
    <recommendedName>
        <fullName>ATP-dependent zinc metalloprotease YME1L1</fullName>
        <ecNumber evidence="7 9 10 11 12 13">3.4.24.-</ecNumber>
        <ecNumber evidence="11">3.6.-.-</ecNumber>
    </recommendedName>
    <alternativeName>
        <fullName>ATP-dependent metalloprotease FtsH1</fullName>
    </alternativeName>
    <alternativeName>
        <fullName>Meg-4</fullName>
    </alternativeName>
    <alternativeName>
        <fullName>Presenilin-associated metalloprotease</fullName>
        <shortName>PAMP</shortName>
    </alternativeName>
    <alternativeName>
        <fullName>YME1-like protein 1</fullName>
    </alternativeName>
</protein>
<dbReference type="EC" id="3.4.24.-" evidence="7 9 10 11 12 13"/>
<dbReference type="EC" id="3.6.-.-" evidence="11"/>
<dbReference type="EMBL" id="AF151782">
    <property type="protein sequence ID" value="AAK57555.1"/>
    <property type="molecule type" value="mRNA"/>
</dbReference>
<dbReference type="EMBL" id="AJ132637">
    <property type="protein sequence ID" value="CAB51858.1"/>
    <property type="molecule type" value="mRNA"/>
</dbReference>
<dbReference type="EMBL" id="AY358484">
    <property type="protein sequence ID" value="AAQ88848.1"/>
    <property type="molecule type" value="mRNA"/>
</dbReference>
<dbReference type="EMBL" id="AK297973">
    <property type="protein sequence ID" value="BAG60283.1"/>
    <property type="molecule type" value="mRNA"/>
</dbReference>
<dbReference type="EMBL" id="AL162272">
    <property type="status" value="NOT_ANNOTATED_CDS"/>
    <property type="molecule type" value="Genomic_DNA"/>
</dbReference>
<dbReference type="EMBL" id="AL160291">
    <property type="status" value="NOT_ANNOTATED_CDS"/>
    <property type="molecule type" value="Genomic_DNA"/>
</dbReference>
<dbReference type="EMBL" id="CH471072">
    <property type="protein sequence ID" value="EAW86068.1"/>
    <property type="molecule type" value="Genomic_DNA"/>
</dbReference>
<dbReference type="EMBL" id="CH471072">
    <property type="protein sequence ID" value="EAW86069.1"/>
    <property type="molecule type" value="Genomic_DNA"/>
</dbReference>
<dbReference type="EMBL" id="CH471072">
    <property type="protein sequence ID" value="EAW86070.1"/>
    <property type="molecule type" value="Genomic_DNA"/>
</dbReference>
<dbReference type="EMBL" id="CH471072">
    <property type="protein sequence ID" value="EAW86071.1"/>
    <property type="molecule type" value="Genomic_DNA"/>
</dbReference>
<dbReference type="EMBL" id="CH471072">
    <property type="protein sequence ID" value="EAW86072.1"/>
    <property type="molecule type" value="Genomic_DNA"/>
</dbReference>
<dbReference type="EMBL" id="BC023507">
    <property type="protein sequence ID" value="AAH23507.1"/>
    <property type="molecule type" value="mRNA"/>
</dbReference>
<dbReference type="EMBL" id="BC024032">
    <property type="protein sequence ID" value="AAH24032.1"/>
    <property type="molecule type" value="mRNA"/>
</dbReference>
<dbReference type="CCDS" id="CCDS58072.1">
    <molecule id="Q96TA2-3"/>
</dbReference>
<dbReference type="CCDS" id="CCDS7151.1">
    <molecule id="Q96TA2-2"/>
</dbReference>
<dbReference type="CCDS" id="CCDS7152.1">
    <molecule id="Q96TA2-1"/>
</dbReference>
<dbReference type="RefSeq" id="NP_001240795.1">
    <molecule id="Q96TA2-3"/>
    <property type="nucleotide sequence ID" value="NM_001253866.2"/>
</dbReference>
<dbReference type="RefSeq" id="NP_055078.1">
    <molecule id="Q96TA2-2"/>
    <property type="nucleotide sequence ID" value="NM_014263.4"/>
</dbReference>
<dbReference type="RefSeq" id="NP_647473.1">
    <molecule id="Q96TA2-1"/>
    <property type="nucleotide sequence ID" value="NM_139312.3"/>
</dbReference>
<dbReference type="SMR" id="Q96TA2"/>
<dbReference type="BioGRID" id="115954">
    <property type="interactions" value="227"/>
</dbReference>
<dbReference type="CORUM" id="Q96TA2"/>
<dbReference type="FunCoup" id="Q96TA2">
    <property type="interactions" value="4177"/>
</dbReference>
<dbReference type="IntAct" id="Q96TA2">
    <property type="interactions" value="137"/>
</dbReference>
<dbReference type="MINT" id="Q96TA2"/>
<dbReference type="STRING" id="9606.ENSP00000318480"/>
<dbReference type="MEROPS" id="M41.026"/>
<dbReference type="GlyGen" id="Q96TA2">
    <property type="glycosylation" value="10 sites, 2 N-linked glycans (4 sites), 1 O-linked glycan (5 sites)"/>
</dbReference>
<dbReference type="iPTMnet" id="Q96TA2"/>
<dbReference type="MetOSite" id="Q96TA2"/>
<dbReference type="PhosphoSitePlus" id="Q96TA2"/>
<dbReference type="SwissPalm" id="Q96TA2"/>
<dbReference type="BioMuta" id="YME1L1"/>
<dbReference type="DMDM" id="46397258"/>
<dbReference type="jPOST" id="Q96TA2"/>
<dbReference type="MassIVE" id="Q96TA2"/>
<dbReference type="PaxDb" id="9606-ENSP00000318480"/>
<dbReference type="PeptideAtlas" id="Q96TA2"/>
<dbReference type="ProteomicsDB" id="4708"/>
<dbReference type="ProteomicsDB" id="78222">
    <molecule id="Q96TA2-1"/>
</dbReference>
<dbReference type="ProteomicsDB" id="78223">
    <molecule id="Q96TA2-2"/>
</dbReference>
<dbReference type="Pumba" id="Q96TA2"/>
<dbReference type="Antibodypedia" id="44412">
    <property type="antibodies" value="169 antibodies from 25 providers"/>
</dbReference>
<dbReference type="DNASU" id="10730"/>
<dbReference type="Ensembl" id="ENST00000326799.7">
    <molecule id="Q96TA2-1"/>
    <property type="protein sequence ID" value="ENSP00000318480.3"/>
    <property type="gene ID" value="ENSG00000136758.21"/>
</dbReference>
<dbReference type="Ensembl" id="ENST00000376016.8">
    <molecule id="Q96TA2-2"/>
    <property type="protein sequence ID" value="ENSP00000365184.3"/>
    <property type="gene ID" value="ENSG00000136758.21"/>
</dbReference>
<dbReference type="Ensembl" id="ENST00000427324.6">
    <molecule id="Q96TA2-3"/>
    <property type="protein sequence ID" value="ENSP00000398713.2"/>
    <property type="gene ID" value="ENSG00000136758.21"/>
</dbReference>
<dbReference type="GeneID" id="10730"/>
<dbReference type="KEGG" id="hsa:10730"/>
<dbReference type="MANE-Select" id="ENST00000376016.8">
    <molecule id="Q96TA2-2"/>
    <property type="protein sequence ID" value="ENSP00000365184.3"/>
    <property type="RefSeq nucleotide sequence ID" value="NM_014263.4"/>
    <property type="RefSeq protein sequence ID" value="NP_055078.1"/>
</dbReference>
<dbReference type="UCSC" id="uc001iti.4">
    <molecule id="Q96TA2-1"/>
    <property type="organism name" value="human"/>
</dbReference>
<dbReference type="AGR" id="HGNC:12843"/>
<dbReference type="CTD" id="10730"/>
<dbReference type="DisGeNET" id="10730"/>
<dbReference type="GeneCards" id="YME1L1"/>
<dbReference type="HGNC" id="HGNC:12843">
    <property type="gene designation" value="YME1L1"/>
</dbReference>
<dbReference type="HPA" id="ENSG00000136758">
    <property type="expression patterns" value="Low tissue specificity"/>
</dbReference>
<dbReference type="MalaCards" id="YME1L1"/>
<dbReference type="MIM" id="607472">
    <property type="type" value="gene"/>
</dbReference>
<dbReference type="MIM" id="617302">
    <property type="type" value="phenotype"/>
</dbReference>
<dbReference type="neXtProt" id="NX_Q96TA2"/>
<dbReference type="OpenTargets" id="ENSG00000136758"/>
<dbReference type="Orphanet" id="98676">
    <property type="disease" value="Autosomal recessive isolated optic atrophy"/>
</dbReference>
<dbReference type="PharmGKB" id="PA37434"/>
<dbReference type="VEuPathDB" id="HostDB:ENSG00000136758"/>
<dbReference type="eggNOG" id="KOG0734">
    <property type="taxonomic scope" value="Eukaryota"/>
</dbReference>
<dbReference type="GeneTree" id="ENSGT00550000074836"/>
<dbReference type="HOGENOM" id="CLU_000688_19_2_1"/>
<dbReference type="InParanoid" id="Q96TA2"/>
<dbReference type="OMA" id="KYDSDPM"/>
<dbReference type="OrthoDB" id="1413014at2759"/>
<dbReference type="PAN-GO" id="Q96TA2">
    <property type="GO annotations" value="4 GO annotations based on evolutionary models"/>
</dbReference>
<dbReference type="PhylomeDB" id="Q96TA2"/>
<dbReference type="TreeFam" id="TF105005"/>
<dbReference type="BRENDA" id="3.4.24.B18">
    <property type="organism ID" value="2681"/>
</dbReference>
<dbReference type="PathwayCommons" id="Q96TA2"/>
<dbReference type="Reactome" id="R-HSA-8949664">
    <property type="pathway name" value="Processing of SMDT1"/>
</dbReference>
<dbReference type="Reactome" id="R-HSA-9837999">
    <property type="pathway name" value="Mitochondrial protein degradation"/>
</dbReference>
<dbReference type="Reactome" id="R-HSA-9840373">
    <property type="pathway name" value="Cellular response to mitochondrial stress"/>
</dbReference>
<dbReference type="SignaLink" id="Q96TA2"/>
<dbReference type="SIGNOR" id="Q96TA2"/>
<dbReference type="BioGRID-ORCS" id="10730">
    <property type="hits" value="174 hits in 1173 CRISPR screens"/>
</dbReference>
<dbReference type="CD-CODE" id="5965E019">
    <property type="entry name" value="mtRNA granule"/>
</dbReference>
<dbReference type="CD-CODE" id="91857CE7">
    <property type="entry name" value="Nucleolus"/>
</dbReference>
<dbReference type="ChiTaRS" id="YME1L1">
    <property type="organism name" value="human"/>
</dbReference>
<dbReference type="GeneWiki" id="YME1L1"/>
<dbReference type="GenomeRNAi" id="10730"/>
<dbReference type="Pharos" id="Q96TA2">
    <property type="development level" value="Tbio"/>
</dbReference>
<dbReference type="PRO" id="PR:Q96TA2"/>
<dbReference type="Proteomes" id="UP000005640">
    <property type="component" value="Chromosome 10"/>
</dbReference>
<dbReference type="RNAct" id="Q96TA2">
    <property type="molecule type" value="protein"/>
</dbReference>
<dbReference type="Bgee" id="ENSG00000136758">
    <property type="expression patterns" value="Expressed in germinal epithelium of ovary and 216 other cell types or tissues"/>
</dbReference>
<dbReference type="ExpressionAtlas" id="Q96TA2">
    <property type="expression patterns" value="baseline and differential"/>
</dbReference>
<dbReference type="GO" id="GO:0016020">
    <property type="term" value="C:membrane"/>
    <property type="evidence" value="ECO:0007005"/>
    <property type="project" value="UniProtKB"/>
</dbReference>
<dbReference type="GO" id="GO:0005743">
    <property type="term" value="C:mitochondrial inner membrane"/>
    <property type="evidence" value="ECO:0000314"/>
    <property type="project" value="UniProtKB"/>
</dbReference>
<dbReference type="GO" id="GO:0005739">
    <property type="term" value="C:mitochondrion"/>
    <property type="evidence" value="ECO:0000314"/>
    <property type="project" value="HPA"/>
</dbReference>
<dbReference type="GO" id="GO:0016604">
    <property type="term" value="C:nuclear body"/>
    <property type="evidence" value="ECO:0000314"/>
    <property type="project" value="HPA"/>
</dbReference>
<dbReference type="GO" id="GO:0005524">
    <property type="term" value="F:ATP binding"/>
    <property type="evidence" value="ECO:0007669"/>
    <property type="project" value="UniProtKB-KW"/>
</dbReference>
<dbReference type="GO" id="GO:0016887">
    <property type="term" value="F:ATP hydrolysis activity"/>
    <property type="evidence" value="ECO:0007669"/>
    <property type="project" value="InterPro"/>
</dbReference>
<dbReference type="GO" id="GO:0004176">
    <property type="term" value="F:ATP-dependent peptidase activity"/>
    <property type="evidence" value="ECO:0000314"/>
    <property type="project" value="UniProtKB"/>
</dbReference>
<dbReference type="GO" id="GO:0046872">
    <property type="term" value="F:metal ion binding"/>
    <property type="evidence" value="ECO:0007669"/>
    <property type="project" value="UniProtKB-KW"/>
</dbReference>
<dbReference type="GO" id="GO:0004222">
    <property type="term" value="F:metalloendopeptidase activity"/>
    <property type="evidence" value="ECO:0007669"/>
    <property type="project" value="InterPro"/>
</dbReference>
<dbReference type="GO" id="GO:0008283">
    <property type="term" value="P:cell population proliferation"/>
    <property type="evidence" value="ECO:0000315"/>
    <property type="project" value="UniProtKB"/>
</dbReference>
<dbReference type="GO" id="GO:0009267">
    <property type="term" value="P:cellular response to starvation"/>
    <property type="evidence" value="ECO:0000314"/>
    <property type="project" value="UniProtKB"/>
</dbReference>
<dbReference type="GO" id="GO:0035694">
    <property type="term" value="P:mitochondrial protein catabolic process"/>
    <property type="evidence" value="ECO:0000315"/>
    <property type="project" value="UniProtKB"/>
</dbReference>
<dbReference type="GO" id="GO:0034982">
    <property type="term" value="P:mitochondrial protein processing"/>
    <property type="evidence" value="ECO:0000315"/>
    <property type="project" value="UniProtKB"/>
</dbReference>
<dbReference type="GO" id="GO:0007005">
    <property type="term" value="P:mitochondrion organization"/>
    <property type="evidence" value="ECO:0000315"/>
    <property type="project" value="UniProtKB"/>
</dbReference>
<dbReference type="GO" id="GO:0043066">
    <property type="term" value="P:negative regulation of apoptotic process"/>
    <property type="evidence" value="ECO:0000315"/>
    <property type="project" value="UniProtKB"/>
</dbReference>
<dbReference type="GO" id="GO:0097150">
    <property type="term" value="P:neuronal stem cell population maintenance"/>
    <property type="evidence" value="ECO:0000250"/>
    <property type="project" value="UniProtKB"/>
</dbReference>
<dbReference type="GO" id="GO:0010636">
    <property type="term" value="P:positive regulation of mitochondrial fusion"/>
    <property type="evidence" value="ECO:0000314"/>
    <property type="project" value="UniProtKB"/>
</dbReference>
<dbReference type="GO" id="GO:0034214">
    <property type="term" value="P:protein hexamerization"/>
    <property type="evidence" value="ECO:0000314"/>
    <property type="project" value="UniProtKB"/>
</dbReference>
<dbReference type="GO" id="GO:0006515">
    <property type="term" value="P:protein quality control for misfolded or incompletely synthesized proteins"/>
    <property type="evidence" value="ECO:0000315"/>
    <property type="project" value="UniProtKB"/>
</dbReference>
<dbReference type="GO" id="GO:2000035">
    <property type="term" value="P:regulation of stem cell division"/>
    <property type="evidence" value="ECO:0000250"/>
    <property type="project" value="UniProtKB"/>
</dbReference>
<dbReference type="CDD" id="cd19501">
    <property type="entry name" value="RecA-like_FtsH"/>
    <property type="match status" value="1"/>
</dbReference>
<dbReference type="FunFam" id="1.10.8.60:FF:000001">
    <property type="entry name" value="ATP-dependent zinc metalloprotease FtsH"/>
    <property type="match status" value="1"/>
</dbReference>
<dbReference type="FunFam" id="1.20.58.760:FF:000002">
    <property type="entry name" value="ATP-dependent zinc metalloprotease FtsH"/>
    <property type="match status" value="1"/>
</dbReference>
<dbReference type="FunFam" id="3.40.50.300:FF:000195">
    <property type="entry name" value="ATP-dependent zinc metalloprotease FTSH 11"/>
    <property type="match status" value="1"/>
</dbReference>
<dbReference type="Gene3D" id="1.10.8.60">
    <property type="match status" value="1"/>
</dbReference>
<dbReference type="Gene3D" id="3.40.50.300">
    <property type="entry name" value="P-loop containing nucleotide triphosphate hydrolases"/>
    <property type="match status" value="1"/>
</dbReference>
<dbReference type="Gene3D" id="1.20.58.760">
    <property type="entry name" value="Peptidase M41"/>
    <property type="match status" value="1"/>
</dbReference>
<dbReference type="HAMAP" id="MF_01458">
    <property type="entry name" value="FtsH"/>
    <property type="match status" value="1"/>
</dbReference>
<dbReference type="InterPro" id="IPR003593">
    <property type="entry name" value="AAA+_ATPase"/>
</dbReference>
<dbReference type="InterPro" id="IPR041569">
    <property type="entry name" value="AAA_lid_3"/>
</dbReference>
<dbReference type="InterPro" id="IPR003959">
    <property type="entry name" value="ATPase_AAA_core"/>
</dbReference>
<dbReference type="InterPro" id="IPR003960">
    <property type="entry name" value="ATPase_AAA_CS"/>
</dbReference>
<dbReference type="InterPro" id="IPR005936">
    <property type="entry name" value="FtsH"/>
</dbReference>
<dbReference type="InterPro" id="IPR027417">
    <property type="entry name" value="P-loop_NTPase"/>
</dbReference>
<dbReference type="InterPro" id="IPR000642">
    <property type="entry name" value="Peptidase_M41"/>
</dbReference>
<dbReference type="InterPro" id="IPR037219">
    <property type="entry name" value="Peptidase_M41-like"/>
</dbReference>
<dbReference type="NCBIfam" id="TIGR01241">
    <property type="entry name" value="FtsH_fam"/>
    <property type="match status" value="1"/>
</dbReference>
<dbReference type="PANTHER" id="PTHR23076:SF97">
    <property type="entry name" value="ATP-DEPENDENT ZINC METALLOPROTEASE YME1L1"/>
    <property type="match status" value="1"/>
</dbReference>
<dbReference type="PANTHER" id="PTHR23076">
    <property type="entry name" value="METALLOPROTEASE M41 FTSH"/>
    <property type="match status" value="1"/>
</dbReference>
<dbReference type="Pfam" id="PF00004">
    <property type="entry name" value="AAA"/>
    <property type="match status" value="1"/>
</dbReference>
<dbReference type="Pfam" id="PF17862">
    <property type="entry name" value="AAA_lid_3"/>
    <property type="match status" value="1"/>
</dbReference>
<dbReference type="Pfam" id="PF01434">
    <property type="entry name" value="Peptidase_M41"/>
    <property type="match status" value="1"/>
</dbReference>
<dbReference type="SMART" id="SM00382">
    <property type="entry name" value="AAA"/>
    <property type="match status" value="1"/>
</dbReference>
<dbReference type="SUPFAM" id="SSF140990">
    <property type="entry name" value="FtsH protease domain-like"/>
    <property type="match status" value="1"/>
</dbReference>
<dbReference type="SUPFAM" id="SSF52540">
    <property type="entry name" value="P-loop containing nucleoside triphosphate hydrolases"/>
    <property type="match status" value="1"/>
</dbReference>
<dbReference type="PROSITE" id="PS00674">
    <property type="entry name" value="AAA"/>
    <property type="match status" value="1"/>
</dbReference>
<gene>
    <name type="primary">YME1L1</name>
    <name type="synonym">FTSH1</name>
    <name type="synonym">YME1L</name>
    <name type="ORF">UNQ1868/PRO4304</name>
</gene>
<comment type="function">
    <text evidence="1 5 6 7 9 10 11 12 13 14">ATP-dependent metalloprotease that catalyzes the degradation of folded and unfolded proteins with a suitable degron sequence in the mitochondrial intermembrane region (PubMed:24315374, PubMed:26923599, PubMed:27786171, PubMed:31695197, PubMed:33237841, PubMed:36206740). Plays an important role in regulating mitochondrial morphology and function by cleaving OPA1 at position S2, giving rise to a form of OPA1 that promotes maintenance of normal mitochondrial structure and mitochondrial protein metabolism (PubMed:18076378, PubMed:26923599, PubMed:27495975, PubMed:33237841). Ensures cell proliferation, maintains normal cristae morphology and complex I respiration activity, promotes antiapoptotic activity and protects mitochondria from the accumulation of oxidatively damaged membrane proteins (PubMed:22262461). Required to control the accumulation of nonassembled respiratory chain subunits (NDUFB6, OX4 and ND1) (PubMed:22262461). Involved in the mitochondrial adaptation in response to various signals, such as stress or developmental cues, by mediating degradation of mitochondrial proteins to rewire the mitochondrial proteome (PubMed:31695197). Catalyzes degradation of mitochondrial proteins, such as translocases, lipid transfer proteins and metabolic enzymes in response to nutrient starvation in order to limit mitochondrial biogenesis: mechanistically, YME1L is activated by decreased phosphatidylethanolamine levels caused by LPIN1 activity in response to mTORC1 inhibition (PubMed:31695197). Acts as a regulator of adult neural stem cell self-renewal by promoting mitochondrial proteome rewiring, preserving neural stem and progenitor cells self-renewal (By similarity). Required for normal, constitutive degradation of PRELID1 (PubMed:27495975). Catalyzes the degradation of OMA1 in response to membrane depolarization (PubMed:26923599). Mediates degradation of TIMM17A downstream of the integrated stress response (ISR) (PubMed:24315374). Catalyzes degradation of MICU1 when MICU1 is not assembled via an interchain disulfide (PubMed:36206740).</text>
</comment>
<comment type="catalytic activity">
    <reaction evidence="11">
        <text>ATP + H2O = ADP + phosphate + H(+)</text>
        <dbReference type="Rhea" id="RHEA:13065"/>
        <dbReference type="ChEBI" id="CHEBI:15377"/>
        <dbReference type="ChEBI" id="CHEBI:15378"/>
        <dbReference type="ChEBI" id="CHEBI:30616"/>
        <dbReference type="ChEBI" id="CHEBI:43474"/>
        <dbReference type="ChEBI" id="CHEBI:456216"/>
    </reaction>
    <physiologicalReaction direction="left-to-right" evidence="11">
        <dbReference type="Rhea" id="RHEA:13066"/>
    </physiologicalReaction>
</comment>
<comment type="cofactor">
    <cofactor evidence="20">
        <name>Zn(2+)</name>
        <dbReference type="ChEBI" id="CHEBI:29105"/>
    </cofactor>
    <text evidence="20">Binds 1 zinc ion per subunit.</text>
</comment>
<comment type="biophysicochemical properties">
    <kinetics>
        <KM evidence="11">1.4 mM for ATP</KM>
    </kinetics>
</comment>
<comment type="subunit">
    <text evidence="6 8 10 11">Homohexamer; may also form heterohexamers (PubMed:27786171). Exists in several complexes of 600-1100 kDa (PubMed:22262461, PubMed:27495975). Interacts with AFG1L (PubMed:26759378).</text>
</comment>
<comment type="subcellular location">
    <subcellularLocation>
        <location evidence="4 6">Mitochondrion inner membrane</location>
    </subcellularLocation>
    <subcellularLocation>
        <location evidence="9 10">Mitochondrion</location>
    </subcellularLocation>
</comment>
<comment type="alternative products">
    <event type="alternative splicing"/>
    <isoform>
        <id>Q96TA2-1</id>
        <name>1</name>
        <sequence type="displayed"/>
    </isoform>
    <isoform>
        <id>Q96TA2-2</id>
        <name>2</name>
        <sequence type="described" ref="VSP_010017"/>
    </isoform>
    <isoform>
        <id>Q96TA2-3</id>
        <name>3</name>
        <sequence type="described" ref="VSP_010017 VSP_045336"/>
    </isoform>
</comment>
<comment type="tissue specificity">
    <text evidence="6">High expression in cardiac and skeletal muscle mitochondria.</text>
</comment>
<comment type="PTM">
    <text evidence="10">Proteolytically processed by mitochondrial processing peptidase (MPP) to generate the mature form (PubMed:27495975). Degraded in an OMA1-dependent manner in response to oxidative stress (PubMed:27495975).</text>
</comment>
<comment type="disease" evidence="10">
    <disease id="DI-04928">
        <name>Optic atrophy 11</name>
        <acronym>OPA11</acronym>
        <description>An autosomal recessive disease characterized by progressive visual loss in association with optic atrophy. Atrophy of the optic disk indicates a deficiency in the number of nerve fibers which arise in the retina and converge to form the optic disk, optic nerve, optic chiasm and optic tracts. OPA11 patients also manifest delayed psychomotor development, intellectual disability, ataxia, and leukoencephalopathy on brain imaging.</description>
        <dbReference type="MIM" id="617302"/>
    </disease>
    <text>The disease may be caused by variants affecting the gene represented in this entry.</text>
</comment>
<comment type="miscellaneous">
    <molecule>Isoform 2</molecule>
    <text evidence="19">Mutagenesis of Glu-543 to Gln does not complement excessive accumulation of subunits (NDUFB6, COX4,ND1) due to YME1 deletion mutant. Probably has no ATPase activity.</text>
</comment>
<comment type="similarity">
    <text evidence="19">In the N-terminal section; belongs to the AAA ATPase family.</text>
</comment>
<comment type="similarity">
    <text evidence="19">In the C-terminal section; belongs to the peptidase M41 family.</text>
</comment>
<reference key="1">
    <citation type="submission" date="1999-05" db="EMBL/GenBank/DDBJ databases">
        <title>Human ATP-dependent metalloprotease (FtsH1) homolog mRNA.</title>
        <authorList>
            <person name="Miyata T."/>
            <person name="Inagi R."/>
            <person name="Yasuda Y."/>
            <person name="Kurokawa K."/>
        </authorList>
    </citation>
    <scope>NUCLEOTIDE SEQUENCE [MRNA] (ISOFORM 1)</scope>
</reference>
<reference key="2">
    <citation type="journal article" date="2000" name="Genomics">
        <title>Identification and characterization of YME1L1, a novel paraplegin-related gene.</title>
        <authorList>
            <person name="Coppola M."/>
            <person name="Pizzigoni A."/>
            <person name="Banfi S."/>
            <person name="Bassi M.T."/>
            <person name="Casari G."/>
            <person name="Incerti B."/>
        </authorList>
    </citation>
    <scope>NUCLEOTIDE SEQUENCE [MRNA] (ISOFORM 2)</scope>
    <scope>SUBCELLULAR LOCATION</scope>
    <source>
        <tissue>Fetal brain</tissue>
    </source>
</reference>
<reference key="3">
    <citation type="journal article" date="2003" name="Genome Res.">
        <title>The secreted protein discovery initiative (SPDI), a large-scale effort to identify novel human secreted and transmembrane proteins: a bioinformatics assessment.</title>
        <authorList>
            <person name="Clark H.F."/>
            <person name="Gurney A.L."/>
            <person name="Abaya E."/>
            <person name="Baker K."/>
            <person name="Baldwin D.T."/>
            <person name="Brush J."/>
            <person name="Chen J."/>
            <person name="Chow B."/>
            <person name="Chui C."/>
            <person name="Crowley C."/>
            <person name="Currell B."/>
            <person name="Deuel B."/>
            <person name="Dowd P."/>
            <person name="Eaton D."/>
            <person name="Foster J.S."/>
            <person name="Grimaldi C."/>
            <person name="Gu Q."/>
            <person name="Hass P.E."/>
            <person name="Heldens S."/>
            <person name="Huang A."/>
            <person name="Kim H.S."/>
            <person name="Klimowski L."/>
            <person name="Jin Y."/>
            <person name="Johnson S."/>
            <person name="Lee J."/>
            <person name="Lewis L."/>
            <person name="Liao D."/>
            <person name="Mark M.R."/>
            <person name="Robbie E."/>
            <person name="Sanchez C."/>
            <person name="Schoenfeld J."/>
            <person name="Seshagiri S."/>
            <person name="Simmons L."/>
            <person name="Singh J."/>
            <person name="Smith V."/>
            <person name="Stinson J."/>
            <person name="Vagts A."/>
            <person name="Vandlen R.L."/>
            <person name="Watanabe C."/>
            <person name="Wieand D."/>
            <person name="Woods K."/>
            <person name="Xie M.-H."/>
            <person name="Yansura D.G."/>
            <person name="Yi S."/>
            <person name="Yu G."/>
            <person name="Yuan J."/>
            <person name="Zhang M."/>
            <person name="Zhang Z."/>
            <person name="Goddard A.D."/>
            <person name="Wood W.I."/>
            <person name="Godowski P.J."/>
            <person name="Gray A.M."/>
        </authorList>
    </citation>
    <scope>NUCLEOTIDE SEQUENCE [LARGE SCALE MRNA] (ISOFORM 2)</scope>
</reference>
<reference key="4">
    <citation type="journal article" date="2004" name="Nat. Genet.">
        <title>Complete sequencing and characterization of 21,243 full-length human cDNAs.</title>
        <authorList>
            <person name="Ota T."/>
            <person name="Suzuki Y."/>
            <person name="Nishikawa T."/>
            <person name="Otsuki T."/>
            <person name="Sugiyama T."/>
            <person name="Irie R."/>
            <person name="Wakamatsu A."/>
            <person name="Hayashi K."/>
            <person name="Sato H."/>
            <person name="Nagai K."/>
            <person name="Kimura K."/>
            <person name="Makita H."/>
            <person name="Sekine M."/>
            <person name="Obayashi M."/>
            <person name="Nishi T."/>
            <person name="Shibahara T."/>
            <person name="Tanaka T."/>
            <person name="Ishii S."/>
            <person name="Yamamoto J."/>
            <person name="Saito K."/>
            <person name="Kawai Y."/>
            <person name="Isono Y."/>
            <person name="Nakamura Y."/>
            <person name="Nagahari K."/>
            <person name="Murakami K."/>
            <person name="Yasuda T."/>
            <person name="Iwayanagi T."/>
            <person name="Wagatsuma M."/>
            <person name="Shiratori A."/>
            <person name="Sudo H."/>
            <person name="Hosoiri T."/>
            <person name="Kaku Y."/>
            <person name="Kodaira H."/>
            <person name="Kondo H."/>
            <person name="Sugawara M."/>
            <person name="Takahashi M."/>
            <person name="Kanda K."/>
            <person name="Yokoi T."/>
            <person name="Furuya T."/>
            <person name="Kikkawa E."/>
            <person name="Omura Y."/>
            <person name="Abe K."/>
            <person name="Kamihara K."/>
            <person name="Katsuta N."/>
            <person name="Sato K."/>
            <person name="Tanikawa M."/>
            <person name="Yamazaki M."/>
            <person name="Ninomiya K."/>
            <person name="Ishibashi T."/>
            <person name="Yamashita H."/>
            <person name="Murakawa K."/>
            <person name="Fujimori K."/>
            <person name="Tanai H."/>
            <person name="Kimata M."/>
            <person name="Watanabe M."/>
            <person name="Hiraoka S."/>
            <person name="Chiba Y."/>
            <person name="Ishida S."/>
            <person name="Ono Y."/>
            <person name="Takiguchi S."/>
            <person name="Watanabe S."/>
            <person name="Yosida M."/>
            <person name="Hotuta T."/>
            <person name="Kusano J."/>
            <person name="Kanehori K."/>
            <person name="Takahashi-Fujii A."/>
            <person name="Hara H."/>
            <person name="Tanase T.-O."/>
            <person name="Nomura Y."/>
            <person name="Togiya S."/>
            <person name="Komai F."/>
            <person name="Hara R."/>
            <person name="Takeuchi K."/>
            <person name="Arita M."/>
            <person name="Imose N."/>
            <person name="Musashino K."/>
            <person name="Yuuki H."/>
            <person name="Oshima A."/>
            <person name="Sasaki N."/>
            <person name="Aotsuka S."/>
            <person name="Yoshikawa Y."/>
            <person name="Matsunawa H."/>
            <person name="Ichihara T."/>
            <person name="Shiohata N."/>
            <person name="Sano S."/>
            <person name="Moriya S."/>
            <person name="Momiyama H."/>
            <person name="Satoh N."/>
            <person name="Takami S."/>
            <person name="Terashima Y."/>
            <person name="Suzuki O."/>
            <person name="Nakagawa S."/>
            <person name="Senoh A."/>
            <person name="Mizoguchi H."/>
            <person name="Goto Y."/>
            <person name="Shimizu F."/>
            <person name="Wakebe H."/>
            <person name="Hishigaki H."/>
            <person name="Watanabe T."/>
            <person name="Sugiyama A."/>
            <person name="Takemoto M."/>
            <person name="Kawakami B."/>
            <person name="Yamazaki M."/>
            <person name="Watanabe K."/>
            <person name="Kumagai A."/>
            <person name="Itakura S."/>
            <person name="Fukuzumi Y."/>
            <person name="Fujimori Y."/>
            <person name="Komiyama M."/>
            <person name="Tashiro H."/>
            <person name="Tanigami A."/>
            <person name="Fujiwara T."/>
            <person name="Ono T."/>
            <person name="Yamada K."/>
            <person name="Fujii Y."/>
            <person name="Ozaki K."/>
            <person name="Hirao M."/>
            <person name="Ohmori Y."/>
            <person name="Kawabata A."/>
            <person name="Hikiji T."/>
            <person name="Kobatake N."/>
            <person name="Inagaki H."/>
            <person name="Ikema Y."/>
            <person name="Okamoto S."/>
            <person name="Okitani R."/>
            <person name="Kawakami T."/>
            <person name="Noguchi S."/>
            <person name="Itoh T."/>
            <person name="Shigeta K."/>
            <person name="Senba T."/>
            <person name="Matsumura K."/>
            <person name="Nakajima Y."/>
            <person name="Mizuno T."/>
            <person name="Morinaga M."/>
            <person name="Sasaki M."/>
            <person name="Togashi T."/>
            <person name="Oyama M."/>
            <person name="Hata H."/>
            <person name="Watanabe M."/>
            <person name="Komatsu T."/>
            <person name="Mizushima-Sugano J."/>
            <person name="Satoh T."/>
            <person name="Shirai Y."/>
            <person name="Takahashi Y."/>
            <person name="Nakagawa K."/>
            <person name="Okumura K."/>
            <person name="Nagase T."/>
            <person name="Nomura N."/>
            <person name="Kikuchi H."/>
            <person name="Masuho Y."/>
            <person name="Yamashita R."/>
            <person name="Nakai K."/>
            <person name="Yada T."/>
            <person name="Nakamura Y."/>
            <person name="Ohara O."/>
            <person name="Isogai T."/>
            <person name="Sugano S."/>
        </authorList>
    </citation>
    <scope>NUCLEOTIDE SEQUENCE [LARGE SCALE MRNA] (ISOFORM 3)</scope>
</reference>
<reference key="5">
    <citation type="journal article" date="2004" name="Nature">
        <title>The DNA sequence and comparative analysis of human chromosome 10.</title>
        <authorList>
            <person name="Deloukas P."/>
            <person name="Earthrowl M.E."/>
            <person name="Grafham D.V."/>
            <person name="Rubenfield M."/>
            <person name="French L."/>
            <person name="Steward C.A."/>
            <person name="Sims S.K."/>
            <person name="Jones M.C."/>
            <person name="Searle S."/>
            <person name="Scott C."/>
            <person name="Howe K."/>
            <person name="Hunt S.E."/>
            <person name="Andrews T.D."/>
            <person name="Gilbert J.G.R."/>
            <person name="Swarbreck D."/>
            <person name="Ashurst J.L."/>
            <person name="Taylor A."/>
            <person name="Battles J."/>
            <person name="Bird C.P."/>
            <person name="Ainscough R."/>
            <person name="Almeida J.P."/>
            <person name="Ashwell R.I.S."/>
            <person name="Ambrose K.D."/>
            <person name="Babbage A.K."/>
            <person name="Bagguley C.L."/>
            <person name="Bailey J."/>
            <person name="Banerjee R."/>
            <person name="Bates K."/>
            <person name="Beasley H."/>
            <person name="Bray-Allen S."/>
            <person name="Brown A.J."/>
            <person name="Brown J.Y."/>
            <person name="Burford D.C."/>
            <person name="Burrill W."/>
            <person name="Burton J."/>
            <person name="Cahill P."/>
            <person name="Camire D."/>
            <person name="Carter N.P."/>
            <person name="Chapman J.C."/>
            <person name="Clark S.Y."/>
            <person name="Clarke G."/>
            <person name="Clee C.M."/>
            <person name="Clegg S."/>
            <person name="Corby N."/>
            <person name="Coulson A."/>
            <person name="Dhami P."/>
            <person name="Dutta I."/>
            <person name="Dunn M."/>
            <person name="Faulkner L."/>
            <person name="Frankish A."/>
            <person name="Frankland J.A."/>
            <person name="Garner P."/>
            <person name="Garnett J."/>
            <person name="Gribble S."/>
            <person name="Griffiths C."/>
            <person name="Grocock R."/>
            <person name="Gustafson E."/>
            <person name="Hammond S."/>
            <person name="Harley J.L."/>
            <person name="Hart E."/>
            <person name="Heath P.D."/>
            <person name="Ho T.P."/>
            <person name="Hopkins B."/>
            <person name="Horne J."/>
            <person name="Howden P.J."/>
            <person name="Huckle E."/>
            <person name="Hynds C."/>
            <person name="Johnson C."/>
            <person name="Johnson D."/>
            <person name="Kana A."/>
            <person name="Kay M."/>
            <person name="Kimberley A.M."/>
            <person name="Kershaw J.K."/>
            <person name="Kokkinaki M."/>
            <person name="Laird G.K."/>
            <person name="Lawlor S."/>
            <person name="Lee H.M."/>
            <person name="Leongamornlert D.A."/>
            <person name="Laird G."/>
            <person name="Lloyd C."/>
            <person name="Lloyd D.M."/>
            <person name="Loveland J."/>
            <person name="Lovell J."/>
            <person name="McLaren S."/>
            <person name="McLay K.E."/>
            <person name="McMurray A."/>
            <person name="Mashreghi-Mohammadi M."/>
            <person name="Matthews L."/>
            <person name="Milne S."/>
            <person name="Nickerson T."/>
            <person name="Nguyen M."/>
            <person name="Overton-Larty E."/>
            <person name="Palmer S.A."/>
            <person name="Pearce A.V."/>
            <person name="Peck A.I."/>
            <person name="Pelan S."/>
            <person name="Phillimore B."/>
            <person name="Porter K."/>
            <person name="Rice C.M."/>
            <person name="Rogosin A."/>
            <person name="Ross M.T."/>
            <person name="Sarafidou T."/>
            <person name="Sehra H.K."/>
            <person name="Shownkeen R."/>
            <person name="Skuce C.D."/>
            <person name="Smith M."/>
            <person name="Standring L."/>
            <person name="Sycamore N."/>
            <person name="Tester J."/>
            <person name="Thorpe A."/>
            <person name="Torcasso W."/>
            <person name="Tracey A."/>
            <person name="Tromans A."/>
            <person name="Tsolas J."/>
            <person name="Wall M."/>
            <person name="Walsh J."/>
            <person name="Wang H."/>
            <person name="Weinstock K."/>
            <person name="West A.P."/>
            <person name="Willey D.L."/>
            <person name="Whitehead S.L."/>
            <person name="Wilming L."/>
            <person name="Wray P.W."/>
            <person name="Young L."/>
            <person name="Chen Y."/>
            <person name="Lovering R.C."/>
            <person name="Moschonas N.K."/>
            <person name="Siebert R."/>
            <person name="Fechtel K."/>
            <person name="Bentley D."/>
            <person name="Durbin R.M."/>
            <person name="Hubbard T."/>
            <person name="Doucette-Stamm L."/>
            <person name="Beck S."/>
            <person name="Smith D.R."/>
            <person name="Rogers J."/>
        </authorList>
    </citation>
    <scope>NUCLEOTIDE SEQUENCE [LARGE SCALE GENOMIC DNA]</scope>
</reference>
<reference key="6">
    <citation type="submission" date="2005-09" db="EMBL/GenBank/DDBJ databases">
        <authorList>
            <person name="Mural R.J."/>
            <person name="Istrail S."/>
            <person name="Sutton G.G."/>
            <person name="Florea L."/>
            <person name="Halpern A.L."/>
            <person name="Mobarry C.M."/>
            <person name="Lippert R."/>
            <person name="Walenz B."/>
            <person name="Shatkay H."/>
            <person name="Dew I."/>
            <person name="Miller J.R."/>
            <person name="Flanigan M.J."/>
            <person name="Edwards N.J."/>
            <person name="Bolanos R."/>
            <person name="Fasulo D."/>
            <person name="Halldorsson B.V."/>
            <person name="Hannenhalli S."/>
            <person name="Turner R."/>
            <person name="Yooseph S."/>
            <person name="Lu F."/>
            <person name="Nusskern D.R."/>
            <person name="Shue B.C."/>
            <person name="Zheng X.H."/>
            <person name="Zhong F."/>
            <person name="Delcher A.L."/>
            <person name="Huson D.H."/>
            <person name="Kravitz S.A."/>
            <person name="Mouchard L."/>
            <person name="Reinert K."/>
            <person name="Remington K.A."/>
            <person name="Clark A.G."/>
            <person name="Waterman M.S."/>
            <person name="Eichler E.E."/>
            <person name="Adams M.D."/>
            <person name="Hunkapiller M.W."/>
            <person name="Myers E.W."/>
            <person name="Venter J.C."/>
        </authorList>
    </citation>
    <scope>NUCLEOTIDE SEQUENCE [LARGE SCALE GENOMIC DNA]</scope>
</reference>
<reference key="7">
    <citation type="journal article" date="2004" name="Genome Res.">
        <title>The status, quality, and expansion of the NIH full-length cDNA project: the Mammalian Gene Collection (MGC).</title>
        <authorList>
            <consortium name="The MGC Project Team"/>
        </authorList>
    </citation>
    <scope>NUCLEOTIDE SEQUENCE [LARGE SCALE MRNA] (ISOFORM 2)</scope>
    <source>
        <tissue>Muscle</tissue>
        <tissue>Placenta</tissue>
    </source>
</reference>
<reference key="8">
    <citation type="journal article" date="2008" name="Biol. Cell">
        <title>Metalloprotease-mediated OPA1 processing is modulated by the mitochondrial membrane potential.</title>
        <authorList>
            <person name="Guillery O."/>
            <person name="Malka F."/>
            <person name="Landes T."/>
            <person name="Guillou E."/>
            <person name="Blackstone C."/>
            <person name="Lombes A."/>
            <person name="Belenguer P."/>
            <person name="Arnoult D."/>
            <person name="Rojo M."/>
        </authorList>
    </citation>
    <scope>FUNCTION IN PROCESSING OF OPA1</scope>
</reference>
<reference key="9">
    <citation type="journal article" date="2011" name="BMC Syst. Biol.">
        <title>Initial characterization of the human central proteome.</title>
        <authorList>
            <person name="Burkard T.R."/>
            <person name="Planyavsky M."/>
            <person name="Kaupe I."/>
            <person name="Breitwieser F.P."/>
            <person name="Buerckstuemmer T."/>
            <person name="Bennett K.L."/>
            <person name="Superti-Furga G."/>
            <person name="Colinge J."/>
        </authorList>
    </citation>
    <scope>IDENTIFICATION BY MASS SPECTROMETRY [LARGE SCALE ANALYSIS]</scope>
</reference>
<reference key="10">
    <citation type="journal article" date="2012" name="Mol. Biol. Cell">
        <title>YME1L controls the accumulation of respiratory chain subunits and is required for apoptotic resistance, cristae morphogenesis and cell proliferation.</title>
        <authorList>
            <person name="Stiburek L."/>
            <person name="Cesnekova J."/>
            <person name="Kostkova O."/>
            <person name="Fornuskova D."/>
            <person name="Vinsova K."/>
            <person name="Wenchich L."/>
            <person name="Houstek J."/>
            <person name="Zeman J."/>
        </authorList>
    </citation>
    <scope>SUBCELLULAR LOCATION</scope>
    <scope>TISSUE SPECIFICITY</scope>
    <scope>FUNCTION</scope>
    <scope>SUBUNIT</scope>
    <scope>MUTAGENESIS (ISOFORM 2)</scope>
</reference>
<reference key="11">
    <citation type="journal article" date="2013" name="Cell Metab.">
        <title>Stress-regulated translational attenuation adapts mitochondrial protein import through Tim17A degradation.</title>
        <authorList>
            <person name="Rainbolt T.K."/>
            <person name="Atanassova N."/>
            <person name="Genereux J.C."/>
            <person name="Wiseman R.L."/>
        </authorList>
    </citation>
    <scope>FUNCTION</scope>
    <scope>CATALYTIC ACTIVITY</scope>
</reference>
<reference key="12">
    <citation type="journal article" date="2013" name="J. Proteome Res.">
        <title>Toward a comprehensive characterization of a human cancer cell phosphoproteome.</title>
        <authorList>
            <person name="Zhou H."/>
            <person name="Di Palma S."/>
            <person name="Preisinger C."/>
            <person name="Peng M."/>
            <person name="Polat A.N."/>
            <person name="Heck A.J."/>
            <person name="Mohammed S."/>
        </authorList>
    </citation>
    <scope>IDENTIFICATION BY MASS SPECTROMETRY [LARGE SCALE ANALYSIS]</scope>
    <source>
        <tissue>Erythroleukemia</tissue>
    </source>
</reference>
<reference key="13">
    <citation type="journal article" date="2015" name="EMBO Rep.">
        <title>YME1L degradation reduces mitochondrial proteolytic capacity during oxidative stress.</title>
        <authorList>
            <person name="Rainbolt T.K."/>
            <person name="Saunders J.M."/>
            <person name="Wiseman R.L."/>
        </authorList>
    </citation>
    <scope>PROTEOLYTIC CLEAVAGE</scope>
</reference>
<reference key="14">
    <citation type="journal article" date="2015" name="Proteomics">
        <title>N-terminome analysis of the human mitochondrial proteome.</title>
        <authorList>
            <person name="Vaca Jacome A.S."/>
            <person name="Rabilloud T."/>
            <person name="Schaeffer-Reiss C."/>
            <person name="Rompais M."/>
            <person name="Ayoub D."/>
            <person name="Lane L."/>
            <person name="Bairoch A."/>
            <person name="Van Dorsselaer A."/>
            <person name="Carapito C."/>
        </authorList>
    </citation>
    <scope>IDENTIFICATION BY MASS SPECTROMETRY [LARGE SCALE ANALYSIS]</scope>
</reference>
<reference key="15">
    <citation type="journal article" date="2016" name="Biochem. J.">
        <title>The mammalian homologue of yeast Afg1 ATPase (lactation elevated 1) mediates degradation of nuclear-encoded complex IV subunits.</title>
        <authorList>
            <person name="Cesnekova J."/>
            <person name="Rodinova M."/>
            <person name="Hansikova H."/>
            <person name="Houstek J."/>
            <person name="Zeman J."/>
            <person name="Stiburek L."/>
        </authorList>
    </citation>
    <scope>INTERACTION WITH AFG1L</scope>
</reference>
<reference key="16">
    <citation type="journal article" date="2016" name="Cell Rep.">
        <title>Reciprocal Degradation of YME1L and OMA1 Adapts Mitochondrial Proteolytic Activity during Stress.</title>
        <authorList>
            <person name="Rainbolt T.K."/>
            <person name="Lebeau J."/>
            <person name="Puchades C."/>
            <person name="Wiseman R.L."/>
        </authorList>
    </citation>
    <scope>FUNCTION</scope>
    <scope>CATALYTIC ACTIVITY</scope>
    <scope>ACTIVE SITE</scope>
    <scope>COFACTOR</scope>
    <scope>SUBCELLULAR LOCATION</scope>
    <scope>MUTAGENESIS OF GLU-439 AND GLU-600</scope>
</reference>
<reference key="17">
    <citation type="journal article" date="2016" name="Nat. Commun.">
        <title>Engineered AAA+ proteases reveal principles of proteolysis at the mitochondrial inner membrane.</title>
        <authorList>
            <person name="Shi H."/>
            <person name="Rampello A.J."/>
            <person name="Glynn S.E."/>
        </authorList>
    </citation>
    <scope>FUNCTION</scope>
    <scope>CATALYTIC ACTIVITY</scope>
    <scope>SUBUNIT</scope>
    <scope>TOPOLOGY</scope>
    <scope>BIOPHYSICOCHEMICAL PROPERTIES</scope>
    <scope>MUTAGENESIS OF GLU-439</scope>
</reference>
<reference key="18">
    <citation type="journal article" date="2016" name="Elife">
        <title>Homozygous YME1L1 mutation causes mitochondriopathy with optic atrophy and mitochondrial network fragmentation.</title>
        <authorList>
            <person name="Hartmann B."/>
            <person name="Wai T."/>
            <person name="Hu H."/>
            <person name="MacVicar T."/>
            <person name="Musante L."/>
            <person name="Fischer-Zirnsak B."/>
            <person name="Stenzel W."/>
            <person name="Graef R."/>
            <person name="van den Heuvel L."/>
            <person name="Ropers H.H."/>
            <person name="Wienker T.F."/>
            <person name="Huebner C."/>
            <person name="Langer T."/>
            <person name="Kaindl A.M."/>
        </authorList>
    </citation>
    <scope>INVOLVEMENT IN OPA11</scope>
    <scope>FUNCTION</scope>
    <scope>CATALYTIC ACTIVITY</scope>
    <scope>SUBCELLULAR LOCATION</scope>
    <scope>SUBUNIT</scope>
    <scope>POST-TRANSLATIONAL PROCESSING</scope>
    <scope>INVOLVEMENT IN MITOCHONDRIAL DISORDER</scope>
    <scope>VARIANT OPA11 TRP-206</scope>
    <scope>CHARACTERIZATION OF VARIANT OPA11 TRP-206</scope>
    <scope>MUTAGENESIS OF GLU-439</scope>
</reference>
<reference key="19">
    <citation type="journal article" date="2019" name="Nature">
        <title>Lipid signalling drives proteolytic rewiring of mitochondria by YME1L.</title>
        <authorList>
            <person name="MacVicar T."/>
            <person name="Ohba Y."/>
            <person name="Nolte H."/>
            <person name="Mayer F.C."/>
            <person name="Tatsuta T."/>
            <person name="Sprenger H.G."/>
            <person name="Lindner B."/>
            <person name="Zhao Y."/>
            <person name="Li J."/>
            <person name="Bruns C."/>
            <person name="Krueger M."/>
            <person name="Habich M."/>
            <person name="Riemer J."/>
            <person name="Schwarzer R."/>
            <person name="Pasparakis M."/>
            <person name="Henschke S."/>
            <person name="Bruening J.C."/>
            <person name="Zamboni N."/>
            <person name="Langer T."/>
        </authorList>
    </citation>
    <scope>FUNCTION</scope>
    <scope>CATALYTIC ACTIVITY</scope>
    <scope>ACTIVE SITE</scope>
    <scope>MUTAGENESIS OF GLU-600</scope>
</reference>
<reference key="20">
    <citation type="journal article" date="2021" name="Mol. Biol. Cell">
        <title>Identification of new OPA1 cleavage site reveals that short isoforms regulate mitochondrial fusion.</title>
        <authorList>
            <person name="Wang R."/>
            <person name="Mishra P."/>
            <person name="Garbis S.D."/>
            <person name="Moradian A."/>
            <person name="Sweredoski M.J."/>
            <person name="Chan D.C."/>
        </authorList>
    </citation>
    <scope>FUNCTION</scope>
</reference>
<reference key="21">
    <citation type="journal article" date="2022" name="Mol. Cell">
        <title>Mechanisms and significance of tissue-specific MICU regulation of the mitochondrial calcium uniporter complex.</title>
        <authorList>
            <person name="Tsai C.W."/>
            <person name="Rodriguez M.X."/>
            <person name="Van Keuren A.M."/>
            <person name="Phillips C.B."/>
            <person name="Shushunov H.M."/>
            <person name="Lee J.E."/>
            <person name="Garcia A.M."/>
            <person name="Ambardekar A.V."/>
            <person name="Cleveland J.C. Jr."/>
            <person name="Reisz J.A."/>
            <person name="Proenza C."/>
            <person name="Chatfield K.C."/>
            <person name="Tsai M.F."/>
        </authorList>
    </citation>
    <scope>FUNCTION</scope>
</reference>
<sequence length="773" mass="86455">MFSLSSTVQPQVTVPLSHLINAFHTPKNTSVSLSGVSVSQNQHRDVVPEHEAPSSECMFSDFLTKLNIVSIGKGKIFEGYRSMFMEPAKRMKKSLDTTDNWHIRPEPFSLSIPPSLNLRDLGLSELKIGQIDQLVENLLPGFCKGKNISSHWHTSHVSAQSFFENKYGNLDIFSTLRSSCLYRHHSRALQSICSDLQYWPVFIQSRGFKTLKSRTRRLQSTSERLAETQNIAPSFVKGFLLRDRGSDVESLDKLMKTKNIPEAHQDAFKTGFAEGFLKAQALTQKTNDSLRRTRLILFVLLLFGIYGLLKNPFLSVRFRTTTGLDSAVDPVQMKNVTFEHVKGVEEAKQELQEVVEFLKNPQKFTILGGKLPKGILLVGPPGTGKTLLARAVAGEADVPFYYASGSEFDEMFVGVGASRIRNLFREAKANAPCVIFIDELDSVGGKRIESPMHPYSRQTINQLLAEMDGFKPNEGVIIIGATNFPEALDNALIRPGRFDMQVTVPRPDVKGRTEILKWYLNKIKFDQSVDPEIIARGTVGFSGAELENLVNQAALKAAVDGKEMVTMKELEFSKDKILMGPERRSVEIDNKNKTITAYHESGHAIIAYYTKDAMPINKATIMPRGPTLGHVSLLPENDRWNETRAQLLAQMDVSMGGRVAEELIFGTDHITTGASSDFDNATKIAKRMVTKFGMSEKLGVMTYSDTGKLSPETQSAIEQEIRILLRDSYERAKHILKTHAKEHKNLAEALLTYETLDAKEIQIVLEGKKLEVR</sequence>
<accession>Q96TA2</accession>
<accession>B4DNM1</accession>
<accession>D3DRV8</accession>
<accession>D3DRV9</accession>
<accession>Q5T8D9</accession>
<accession>Q9H1Q0</accession>
<accession>Q9UMR9</accession>
<organism>
    <name type="scientific">Homo sapiens</name>
    <name type="common">Human</name>
    <dbReference type="NCBI Taxonomy" id="9606"/>
    <lineage>
        <taxon>Eukaryota</taxon>
        <taxon>Metazoa</taxon>
        <taxon>Chordata</taxon>
        <taxon>Craniata</taxon>
        <taxon>Vertebrata</taxon>
        <taxon>Euteleostomi</taxon>
        <taxon>Mammalia</taxon>
        <taxon>Eutheria</taxon>
        <taxon>Euarchontoglires</taxon>
        <taxon>Primates</taxon>
        <taxon>Haplorrhini</taxon>
        <taxon>Catarrhini</taxon>
        <taxon>Hominidae</taxon>
        <taxon>Homo</taxon>
    </lineage>
</organism>
<evidence type="ECO:0000250" key="1">
    <source>
        <dbReference type="UniProtKB" id="O88967"/>
    </source>
</evidence>
<evidence type="ECO:0000250" key="2">
    <source>
        <dbReference type="UniProtKB" id="Q9Y4W6"/>
    </source>
</evidence>
<evidence type="ECO:0000255" key="3"/>
<evidence type="ECO:0000269" key="4">
    <source>
    </source>
</evidence>
<evidence type="ECO:0000269" key="5">
    <source>
    </source>
</evidence>
<evidence type="ECO:0000269" key="6">
    <source>
    </source>
</evidence>
<evidence type="ECO:0000269" key="7">
    <source>
    </source>
</evidence>
<evidence type="ECO:0000269" key="8">
    <source>
    </source>
</evidence>
<evidence type="ECO:0000269" key="9">
    <source>
    </source>
</evidence>
<evidence type="ECO:0000269" key="10">
    <source>
    </source>
</evidence>
<evidence type="ECO:0000269" key="11">
    <source>
    </source>
</evidence>
<evidence type="ECO:0000269" key="12">
    <source>
    </source>
</evidence>
<evidence type="ECO:0000269" key="13">
    <source>
    </source>
</evidence>
<evidence type="ECO:0000269" key="14">
    <source>
    </source>
</evidence>
<evidence type="ECO:0000303" key="15">
    <source>
    </source>
</evidence>
<evidence type="ECO:0000303" key="16">
    <source>
    </source>
</evidence>
<evidence type="ECO:0000303" key="17">
    <source>
    </source>
</evidence>
<evidence type="ECO:0000303" key="18">
    <source>
    </source>
</evidence>
<evidence type="ECO:0000305" key="19"/>
<evidence type="ECO:0000305" key="20">
    <source>
    </source>
</evidence>
<evidence type="ECO:0000305" key="21">
    <source>
    </source>
</evidence>
<evidence type="ECO:0000305" key="22">
    <source>
    </source>
</evidence>
<keyword id="KW-0025">Alternative splicing</keyword>
<keyword id="KW-0067">ATP-binding</keyword>
<keyword id="KW-0225">Disease variant</keyword>
<keyword id="KW-0378">Hydrolase</keyword>
<keyword id="KW-0472">Membrane</keyword>
<keyword id="KW-0479">Metal-binding</keyword>
<keyword id="KW-0482">Metalloprotease</keyword>
<keyword id="KW-0496">Mitochondrion</keyword>
<keyword id="KW-0999">Mitochondrion inner membrane</keyword>
<keyword id="KW-0547">Nucleotide-binding</keyword>
<keyword id="KW-0645">Protease</keyword>
<keyword id="KW-1267">Proteomics identification</keyword>
<keyword id="KW-1185">Reference proteome</keyword>
<keyword id="KW-0812">Transmembrane</keyword>
<keyword id="KW-1133">Transmembrane helix</keyword>
<keyword id="KW-0862">Zinc</keyword>
<name>YMEL1_HUMAN</name>